<keyword id="KW-0028">Amino-acid biosynthesis</keyword>
<keyword id="KW-0963">Cytoplasm</keyword>
<keyword id="KW-0554">One-carbon metabolism</keyword>
<keyword id="KW-0663">Pyridoxal phosphate</keyword>
<keyword id="KW-0808">Transferase</keyword>
<feature type="chain" id="PRO_0000113689" description="Serine hydroxymethyltransferase">
    <location>
        <begin position="1"/>
        <end position="428"/>
    </location>
</feature>
<feature type="binding site" evidence="1">
    <location>
        <position position="127"/>
    </location>
    <ligand>
        <name>(6S)-5,6,7,8-tetrahydrofolate</name>
        <dbReference type="ChEBI" id="CHEBI:57453"/>
    </ligand>
</feature>
<feature type="binding site" evidence="1">
    <location>
        <begin position="131"/>
        <end position="133"/>
    </location>
    <ligand>
        <name>(6S)-5,6,7,8-tetrahydrofolate</name>
        <dbReference type="ChEBI" id="CHEBI:57453"/>
    </ligand>
</feature>
<feature type="site" description="Plays an important role in substrate specificity" evidence="1">
    <location>
        <position position="235"/>
    </location>
</feature>
<feature type="modified residue" description="N6-(pyridoxal phosphate)lysine" evidence="1">
    <location>
        <position position="236"/>
    </location>
</feature>
<sequence>MNHGVYQNLFIDSLDSVDPQIAEVLDLELRRQRDFLEMIASENFVPRAILQAQGSVLTNKYAEGYPQNRYYGGCECVDLAEDLAISRVRDLFGSEFANVQPHSGSTANAAALMALTEVGSTIMGLELDHGGHLTHGMPLSFSGKHYKAVTYRLDPKTCLIDMDSVRDLALRHRPSVIIAGWSAYVRHLDFEAFRSIADEVGARLWVDMAHFAGLVAAGLYPSPIPWADVVTSTTHKTLAGPRGGFILAKKEFGKAINTAVFPGQQGGPLMHVIAAKAVAFKVAASEGFRERQRITIEAARTVAKRIGEDYRLRDRGIDILTGGTDVHMVLVDMRKSDMDGLTGQNLLHEVGVTVNRNSMPYDKRPPRITSGIRIGTPALVTRGLSLDEFDEVADIISNALLTIDLPKQKQRALRIARTHPVYEGLRQY</sequence>
<accession>P66806</accession>
<accession>Q83FS1</accession>
<accession>Q83HE9</accession>
<organism>
    <name type="scientific">Tropheryma whipplei (strain TW08/27)</name>
    <name type="common">Whipple's bacillus</name>
    <dbReference type="NCBI Taxonomy" id="218496"/>
    <lineage>
        <taxon>Bacteria</taxon>
        <taxon>Bacillati</taxon>
        <taxon>Actinomycetota</taxon>
        <taxon>Actinomycetes</taxon>
        <taxon>Micrococcales</taxon>
        <taxon>Tropherymataceae</taxon>
        <taxon>Tropheryma</taxon>
    </lineage>
</organism>
<comment type="function">
    <text evidence="1">Catalyzes the reversible interconversion of serine and glycine with tetrahydrofolate (THF) serving as the one-carbon carrier. This reaction serves as the major source of one-carbon groups required for the biosynthesis of purines, thymidylate, methionine, and other important biomolecules. Also exhibits THF-independent aldolase activity toward beta-hydroxyamino acids, producing glycine and aldehydes, via a retro-aldol mechanism.</text>
</comment>
<comment type="catalytic activity">
    <reaction evidence="1">
        <text>(6R)-5,10-methylene-5,6,7,8-tetrahydrofolate + glycine + H2O = (6S)-5,6,7,8-tetrahydrofolate + L-serine</text>
        <dbReference type="Rhea" id="RHEA:15481"/>
        <dbReference type="ChEBI" id="CHEBI:15377"/>
        <dbReference type="ChEBI" id="CHEBI:15636"/>
        <dbReference type="ChEBI" id="CHEBI:33384"/>
        <dbReference type="ChEBI" id="CHEBI:57305"/>
        <dbReference type="ChEBI" id="CHEBI:57453"/>
        <dbReference type="EC" id="2.1.2.1"/>
    </reaction>
</comment>
<comment type="cofactor">
    <cofactor evidence="1">
        <name>pyridoxal 5'-phosphate</name>
        <dbReference type="ChEBI" id="CHEBI:597326"/>
    </cofactor>
</comment>
<comment type="pathway">
    <text evidence="1">One-carbon metabolism; tetrahydrofolate interconversion.</text>
</comment>
<comment type="pathway">
    <text evidence="1">Amino-acid biosynthesis; glycine biosynthesis; glycine from L-serine: step 1/1.</text>
</comment>
<comment type="subunit">
    <text evidence="1">Homodimer.</text>
</comment>
<comment type="subcellular location">
    <subcellularLocation>
        <location evidence="1">Cytoplasm</location>
    </subcellularLocation>
</comment>
<comment type="similarity">
    <text evidence="1">Belongs to the SHMT family.</text>
</comment>
<proteinExistence type="inferred from homology"/>
<name>GLYA_TROW8</name>
<gene>
    <name evidence="1" type="primary">glyA</name>
    <name type="ordered locus">TW655</name>
</gene>
<protein>
    <recommendedName>
        <fullName evidence="1">Serine hydroxymethyltransferase</fullName>
        <shortName evidence="1">SHMT</shortName>
        <shortName evidence="1">Serine methylase</shortName>
        <ecNumber evidence="1">2.1.2.1</ecNumber>
    </recommendedName>
</protein>
<reference key="1">
    <citation type="journal article" date="2003" name="Lancet">
        <title>Sequencing and analysis of the genome of the Whipple's disease bacterium Tropheryma whipplei.</title>
        <authorList>
            <person name="Bentley S.D."/>
            <person name="Maiwald M."/>
            <person name="Murphy L.D."/>
            <person name="Pallen M.J."/>
            <person name="Yeats C.A."/>
            <person name="Dover L.G."/>
            <person name="Norbertczak H.T."/>
            <person name="Besra G.S."/>
            <person name="Quail M.A."/>
            <person name="Harris D.E."/>
            <person name="von Herbay A."/>
            <person name="Goble A."/>
            <person name="Rutter S."/>
            <person name="Squares R."/>
            <person name="Squares S."/>
            <person name="Barrell B.G."/>
            <person name="Parkhill J."/>
            <person name="Relman D.A."/>
        </authorList>
    </citation>
    <scope>NUCLEOTIDE SEQUENCE [LARGE SCALE GENOMIC DNA]</scope>
    <source>
        <strain>TW08/27</strain>
    </source>
</reference>
<dbReference type="EC" id="2.1.2.1" evidence="1"/>
<dbReference type="EMBL" id="BX251412">
    <property type="protein sequence ID" value="CAD67316.1"/>
    <property type="molecule type" value="Genomic_DNA"/>
</dbReference>
<dbReference type="RefSeq" id="WP_011096594.1">
    <property type="nucleotide sequence ID" value="NC_004551.1"/>
</dbReference>
<dbReference type="SMR" id="P66806"/>
<dbReference type="GeneID" id="67388434"/>
<dbReference type="KEGG" id="tws:TW655"/>
<dbReference type="HOGENOM" id="CLU_022477_2_1_11"/>
<dbReference type="UniPathway" id="UPA00193"/>
<dbReference type="UniPathway" id="UPA00288">
    <property type="reaction ID" value="UER01023"/>
</dbReference>
<dbReference type="GO" id="GO:0005829">
    <property type="term" value="C:cytosol"/>
    <property type="evidence" value="ECO:0007669"/>
    <property type="project" value="TreeGrafter"/>
</dbReference>
<dbReference type="GO" id="GO:0004372">
    <property type="term" value="F:glycine hydroxymethyltransferase activity"/>
    <property type="evidence" value="ECO:0007669"/>
    <property type="project" value="UniProtKB-UniRule"/>
</dbReference>
<dbReference type="GO" id="GO:0030170">
    <property type="term" value="F:pyridoxal phosphate binding"/>
    <property type="evidence" value="ECO:0007669"/>
    <property type="project" value="UniProtKB-UniRule"/>
</dbReference>
<dbReference type="GO" id="GO:0019264">
    <property type="term" value="P:glycine biosynthetic process from serine"/>
    <property type="evidence" value="ECO:0007669"/>
    <property type="project" value="UniProtKB-UniRule"/>
</dbReference>
<dbReference type="GO" id="GO:0035999">
    <property type="term" value="P:tetrahydrofolate interconversion"/>
    <property type="evidence" value="ECO:0007669"/>
    <property type="project" value="UniProtKB-UniRule"/>
</dbReference>
<dbReference type="CDD" id="cd00378">
    <property type="entry name" value="SHMT"/>
    <property type="match status" value="1"/>
</dbReference>
<dbReference type="FunFam" id="3.40.640.10:FF:000001">
    <property type="entry name" value="Serine hydroxymethyltransferase"/>
    <property type="match status" value="1"/>
</dbReference>
<dbReference type="Gene3D" id="3.90.1150.10">
    <property type="entry name" value="Aspartate Aminotransferase, domain 1"/>
    <property type="match status" value="1"/>
</dbReference>
<dbReference type="Gene3D" id="3.40.640.10">
    <property type="entry name" value="Type I PLP-dependent aspartate aminotransferase-like (Major domain)"/>
    <property type="match status" value="1"/>
</dbReference>
<dbReference type="HAMAP" id="MF_00051">
    <property type="entry name" value="SHMT"/>
    <property type="match status" value="1"/>
</dbReference>
<dbReference type="InterPro" id="IPR015424">
    <property type="entry name" value="PyrdxlP-dep_Trfase"/>
</dbReference>
<dbReference type="InterPro" id="IPR015421">
    <property type="entry name" value="PyrdxlP-dep_Trfase_major"/>
</dbReference>
<dbReference type="InterPro" id="IPR015422">
    <property type="entry name" value="PyrdxlP-dep_Trfase_small"/>
</dbReference>
<dbReference type="InterPro" id="IPR001085">
    <property type="entry name" value="Ser_HO-MeTrfase"/>
</dbReference>
<dbReference type="InterPro" id="IPR049943">
    <property type="entry name" value="Ser_HO-MeTrfase-like"/>
</dbReference>
<dbReference type="InterPro" id="IPR019798">
    <property type="entry name" value="Ser_HO-MeTrfase_PLP_BS"/>
</dbReference>
<dbReference type="InterPro" id="IPR039429">
    <property type="entry name" value="SHMT-like_dom"/>
</dbReference>
<dbReference type="NCBIfam" id="NF000586">
    <property type="entry name" value="PRK00011.1"/>
    <property type="match status" value="1"/>
</dbReference>
<dbReference type="PANTHER" id="PTHR11680">
    <property type="entry name" value="SERINE HYDROXYMETHYLTRANSFERASE"/>
    <property type="match status" value="1"/>
</dbReference>
<dbReference type="PANTHER" id="PTHR11680:SF35">
    <property type="entry name" value="SERINE HYDROXYMETHYLTRANSFERASE 1"/>
    <property type="match status" value="1"/>
</dbReference>
<dbReference type="Pfam" id="PF00464">
    <property type="entry name" value="SHMT"/>
    <property type="match status" value="1"/>
</dbReference>
<dbReference type="PIRSF" id="PIRSF000412">
    <property type="entry name" value="SHMT"/>
    <property type="match status" value="1"/>
</dbReference>
<dbReference type="SUPFAM" id="SSF53383">
    <property type="entry name" value="PLP-dependent transferases"/>
    <property type="match status" value="1"/>
</dbReference>
<dbReference type="PROSITE" id="PS00096">
    <property type="entry name" value="SHMT"/>
    <property type="match status" value="1"/>
</dbReference>
<evidence type="ECO:0000255" key="1">
    <source>
        <dbReference type="HAMAP-Rule" id="MF_00051"/>
    </source>
</evidence>